<feature type="chain" id="PRO_0000317829" description="Autophagy-related protein 3">
    <location>
        <begin position="1"/>
        <end position="362"/>
    </location>
</feature>
<feature type="region of interest" description="Flexible region" evidence="1">
    <location>
        <begin position="84"/>
        <end position="168"/>
    </location>
</feature>
<feature type="region of interest" description="Disordered" evidence="2">
    <location>
        <begin position="85"/>
        <end position="164"/>
    </location>
</feature>
<feature type="region of interest" description="Handle region" evidence="1">
    <location>
        <begin position="250"/>
        <end position="338"/>
    </location>
</feature>
<feature type="compositionally biased region" description="Basic and acidic residues" evidence="2">
    <location>
        <begin position="85"/>
        <end position="104"/>
    </location>
</feature>
<feature type="compositionally biased region" description="Basic and acidic residues" evidence="2">
    <location>
        <begin position="128"/>
        <end position="137"/>
    </location>
</feature>
<feature type="compositionally biased region" description="Acidic residues" evidence="2">
    <location>
        <begin position="138"/>
        <end position="163"/>
    </location>
</feature>
<feature type="active site" description="Glycyl thioester intermediate" evidence="1">
    <location>
        <position position="246"/>
    </location>
</feature>
<proteinExistence type="inferred from homology"/>
<comment type="function">
    <text evidence="1">E2 conjugating enzyme required for the cytoplasm to vacuole transport (Cvt) and autophagy. Required for selective autophagic degradation of the nucleus (nucleophagy) as well as for mitophagy which contributes to regulate mitochondrial quantity and quality by eliminating the mitochondria to a basal level to fulfill cellular energy requirements and preventing excess ROS production. Responsible for the E2-like covalent binding of phosphatidylethanolamine to the C-terminal Gly of atg8. The atg12-atg5 conjugate plays a role of an E3 and promotes the transfer of atg8 from atg3 to phosphatidylethanolamine (PE). This step is required for the membrane association of atg8. The formation of the atg8-phosphatidylethanolamine conjugate is essential for autophagy and for the cytoplasm to vacuole transport (Cvt). The atg8-PE conjugate mediates tethering between adjacent membranes and stimulates membrane hemifusion, leading to expansion of the autophagosomal membrane during autophagy (By similarity).</text>
</comment>
<comment type="subunit">
    <text evidence="1">Monomer. Interacts with atg8 through an intermediate thioester bond through the C-terminal Gly of atg8. Also interacts with the 40 amino acid C-terminal region of the E1-like atg7 enzyme. Also interacts with the atg12-atg5 conjugate.</text>
</comment>
<comment type="subcellular location">
    <subcellularLocation>
        <location evidence="1">Cytoplasm</location>
    </subcellularLocation>
</comment>
<comment type="domain">
    <text evidence="1">The N-terminal region is involved in phosphatidylethanolamine-binding and is required for atg8-PE conjugation.</text>
</comment>
<comment type="domain">
    <text evidence="1">The flexible region (FR) is required for atg7-binding.</text>
</comment>
<comment type="domain">
    <text evidence="1">The handle region (HR) contains the atg8 interaction motif (AIM) and mediates binding to atg8. It is crucial for the cytoplasm-to-vacuole targeting pathway (By similarity).</text>
</comment>
<comment type="similarity">
    <text evidence="3">Belongs to the ATG3 family.</text>
</comment>
<gene>
    <name type="primary">atg3</name>
    <name type="ORF">SS1G_11342</name>
</gene>
<protein>
    <recommendedName>
        <fullName>Autophagy-related protein 3</fullName>
    </recommendedName>
    <alternativeName>
        <fullName>Autophagy-related E2-like conjugation enzyme atg3</fullName>
    </alternativeName>
</protein>
<dbReference type="EMBL" id="CH476638">
    <property type="protein sequence ID" value="EDN95464.1"/>
    <property type="molecule type" value="Genomic_DNA"/>
</dbReference>
<dbReference type="RefSeq" id="XP_001587350.1">
    <property type="nucleotide sequence ID" value="XM_001587300.1"/>
</dbReference>
<dbReference type="SMR" id="A7F172"/>
<dbReference type="FunCoup" id="A7F172">
    <property type="interactions" value="1021"/>
</dbReference>
<dbReference type="STRING" id="665079.A7F172"/>
<dbReference type="GeneID" id="5483489"/>
<dbReference type="KEGG" id="ssl:SS1G_11342"/>
<dbReference type="VEuPathDB" id="FungiDB:sscle_07g059210"/>
<dbReference type="InParanoid" id="A7F172"/>
<dbReference type="OMA" id="HCPTWSW"/>
<dbReference type="OrthoDB" id="1584384at2759"/>
<dbReference type="Proteomes" id="UP000001312">
    <property type="component" value="Unassembled WGS sequence"/>
</dbReference>
<dbReference type="GO" id="GO:0005829">
    <property type="term" value="C:cytosol"/>
    <property type="evidence" value="ECO:0000318"/>
    <property type="project" value="GO_Central"/>
</dbReference>
<dbReference type="GO" id="GO:0000407">
    <property type="term" value="C:phagophore assembly site"/>
    <property type="evidence" value="ECO:0000318"/>
    <property type="project" value="GO_Central"/>
</dbReference>
<dbReference type="GO" id="GO:0141046">
    <property type="term" value="F:Atg8-family conjugating enzyme activity"/>
    <property type="evidence" value="ECO:0000318"/>
    <property type="project" value="GO_Central"/>
</dbReference>
<dbReference type="GO" id="GO:0000045">
    <property type="term" value="P:autophagosome assembly"/>
    <property type="evidence" value="ECO:0000318"/>
    <property type="project" value="GO_Central"/>
</dbReference>
<dbReference type="GO" id="GO:0000422">
    <property type="term" value="P:autophagy of mitochondrion"/>
    <property type="evidence" value="ECO:0000318"/>
    <property type="project" value="GO_Central"/>
</dbReference>
<dbReference type="GO" id="GO:0061723">
    <property type="term" value="P:glycophagy"/>
    <property type="evidence" value="ECO:0000318"/>
    <property type="project" value="GO_Central"/>
</dbReference>
<dbReference type="GO" id="GO:0044804">
    <property type="term" value="P:nucleophagy"/>
    <property type="evidence" value="ECO:0000318"/>
    <property type="project" value="GO_Central"/>
</dbReference>
<dbReference type="GO" id="GO:0015031">
    <property type="term" value="P:protein transport"/>
    <property type="evidence" value="ECO:0007669"/>
    <property type="project" value="UniProtKB-KW"/>
</dbReference>
<dbReference type="InterPro" id="IPR007135">
    <property type="entry name" value="Atg3/Atg10"/>
</dbReference>
<dbReference type="PANTHER" id="PTHR12866">
    <property type="entry name" value="UBIQUITIN-LIKE-CONJUGATING ENZYME ATG3"/>
    <property type="match status" value="1"/>
</dbReference>
<dbReference type="PANTHER" id="PTHR12866:SF2">
    <property type="entry name" value="UBIQUITIN-LIKE-CONJUGATING ENZYME ATG3"/>
    <property type="match status" value="1"/>
</dbReference>
<dbReference type="Pfam" id="PF03987">
    <property type="entry name" value="Autophagy_act_C"/>
    <property type="match status" value="1"/>
</dbReference>
<organism>
    <name type="scientific">Sclerotinia sclerotiorum (strain ATCC 18683 / 1980 / Ss-1)</name>
    <name type="common">White mold</name>
    <name type="synonym">Whetzelinia sclerotiorum</name>
    <dbReference type="NCBI Taxonomy" id="665079"/>
    <lineage>
        <taxon>Eukaryota</taxon>
        <taxon>Fungi</taxon>
        <taxon>Dikarya</taxon>
        <taxon>Ascomycota</taxon>
        <taxon>Pezizomycotina</taxon>
        <taxon>Leotiomycetes</taxon>
        <taxon>Helotiales</taxon>
        <taxon>Sclerotiniaceae</taxon>
        <taxon>Sclerotinia</taxon>
    </lineage>
</organism>
<evidence type="ECO:0000250" key="1"/>
<evidence type="ECO:0000256" key="2">
    <source>
        <dbReference type="SAM" id="MobiDB-lite"/>
    </source>
</evidence>
<evidence type="ECO:0000305" key="3"/>
<sequence>MNFLHSTLDRLREFTPVSNTSTFRTNGQITPEEFVAAGDYLVFKFPTWSWADASPTSKRASYLPAGKQFLVTRGVPCHRRLDDDFAGEAGHDETVVGDGEDFRGTGHSPGDDEDGWLRTGGLAASQEARARDVRTVDESGEMGEREDDEDDIPDMEDEDDDDEAIIRDPKADNANSSRRTYTIYIAYTPYYRTPRLYLSGYLSSSQPLPPHLMMEDIVGDYKDKTVTLEDFPYFSNNIKMASIHPCKHASVMKTLLDRADAALKLRREKQKQGKTVPGAKDTGMEGLVDDFEKTKISDKKAMLEGLKAGGNGNDEWEVLQHDQDFASEEEEVAIRVDQYLVVFLKFMASVTPGIEHDFTMGV</sequence>
<keyword id="KW-0072">Autophagy</keyword>
<keyword id="KW-0963">Cytoplasm</keyword>
<keyword id="KW-0653">Protein transport</keyword>
<keyword id="KW-1185">Reference proteome</keyword>
<keyword id="KW-0813">Transport</keyword>
<keyword id="KW-0833">Ubl conjugation pathway</keyword>
<reference key="1">
    <citation type="journal article" date="2011" name="PLoS Genet.">
        <title>Genomic analysis of the necrotrophic fungal pathogens Sclerotinia sclerotiorum and Botrytis cinerea.</title>
        <authorList>
            <person name="Amselem J."/>
            <person name="Cuomo C.A."/>
            <person name="van Kan J.A.L."/>
            <person name="Viaud M."/>
            <person name="Benito E.P."/>
            <person name="Couloux A."/>
            <person name="Coutinho P.M."/>
            <person name="de Vries R.P."/>
            <person name="Dyer P.S."/>
            <person name="Fillinger S."/>
            <person name="Fournier E."/>
            <person name="Gout L."/>
            <person name="Hahn M."/>
            <person name="Kohn L."/>
            <person name="Lapalu N."/>
            <person name="Plummer K.M."/>
            <person name="Pradier J.-M."/>
            <person name="Quevillon E."/>
            <person name="Sharon A."/>
            <person name="Simon A."/>
            <person name="ten Have A."/>
            <person name="Tudzynski B."/>
            <person name="Tudzynski P."/>
            <person name="Wincker P."/>
            <person name="Andrew M."/>
            <person name="Anthouard V."/>
            <person name="Beever R.E."/>
            <person name="Beffa R."/>
            <person name="Benoit I."/>
            <person name="Bouzid O."/>
            <person name="Brault B."/>
            <person name="Chen Z."/>
            <person name="Choquer M."/>
            <person name="Collemare J."/>
            <person name="Cotton P."/>
            <person name="Danchin E.G."/>
            <person name="Da Silva C."/>
            <person name="Gautier A."/>
            <person name="Giraud C."/>
            <person name="Giraud T."/>
            <person name="Gonzalez C."/>
            <person name="Grossetete S."/>
            <person name="Gueldener U."/>
            <person name="Henrissat B."/>
            <person name="Howlett B.J."/>
            <person name="Kodira C."/>
            <person name="Kretschmer M."/>
            <person name="Lappartient A."/>
            <person name="Leroch M."/>
            <person name="Levis C."/>
            <person name="Mauceli E."/>
            <person name="Neuveglise C."/>
            <person name="Oeser B."/>
            <person name="Pearson M."/>
            <person name="Poulain J."/>
            <person name="Poussereau N."/>
            <person name="Quesneville H."/>
            <person name="Rascle C."/>
            <person name="Schumacher J."/>
            <person name="Segurens B."/>
            <person name="Sexton A."/>
            <person name="Silva E."/>
            <person name="Sirven C."/>
            <person name="Soanes D.M."/>
            <person name="Talbot N.J."/>
            <person name="Templeton M."/>
            <person name="Yandava C."/>
            <person name="Yarden O."/>
            <person name="Zeng Q."/>
            <person name="Rollins J.A."/>
            <person name="Lebrun M.-H."/>
            <person name="Dickman M."/>
        </authorList>
    </citation>
    <scope>NUCLEOTIDE SEQUENCE [LARGE SCALE GENOMIC DNA]</scope>
    <source>
        <strain>ATCC 18683 / 1980 / Ss-1</strain>
    </source>
</reference>
<accession>A7F172</accession>
<name>ATG3_SCLS1</name>